<organism>
    <name type="scientific">Saccharomyces cerevisiae (strain ATCC 204508 / S288c)</name>
    <name type="common">Baker's yeast</name>
    <dbReference type="NCBI Taxonomy" id="559292"/>
    <lineage>
        <taxon>Eukaryota</taxon>
        <taxon>Fungi</taxon>
        <taxon>Dikarya</taxon>
        <taxon>Ascomycota</taxon>
        <taxon>Saccharomycotina</taxon>
        <taxon>Saccharomycetes</taxon>
        <taxon>Saccharomycetales</taxon>
        <taxon>Saccharomycetaceae</taxon>
        <taxon>Saccharomyces</taxon>
    </lineage>
</organism>
<dbReference type="EC" id="1.3.1.71" evidence="4"/>
<dbReference type="EMBL" id="S58126">
    <property type="protein sequence ID" value="AAD13895.1"/>
    <property type="molecule type" value="Genomic_DNA"/>
</dbReference>
<dbReference type="EMBL" id="S57891">
    <property type="protein sequence ID" value="AAB19615.1"/>
    <property type="molecule type" value="Genomic_DNA"/>
</dbReference>
<dbReference type="EMBL" id="Z72534">
    <property type="protein sequence ID" value="CAA96712.1"/>
    <property type="molecule type" value="Genomic_DNA"/>
</dbReference>
<dbReference type="EMBL" id="AY693205">
    <property type="protein sequence ID" value="AAT93224.1"/>
    <property type="molecule type" value="Genomic_DNA"/>
</dbReference>
<dbReference type="EMBL" id="BK006941">
    <property type="protein sequence ID" value="DAA08086.1"/>
    <property type="molecule type" value="Genomic_DNA"/>
</dbReference>
<dbReference type="PIR" id="S64014">
    <property type="entry name" value="S64014"/>
</dbReference>
<dbReference type="RefSeq" id="NP_011503.1">
    <property type="nucleotide sequence ID" value="NM_001180877.1"/>
</dbReference>
<dbReference type="SMR" id="P25340"/>
<dbReference type="BioGRID" id="33234">
    <property type="interactions" value="297"/>
</dbReference>
<dbReference type="DIP" id="DIP-7177N"/>
<dbReference type="FunCoup" id="P25340">
    <property type="interactions" value="173"/>
</dbReference>
<dbReference type="IntAct" id="P25340">
    <property type="interactions" value="43"/>
</dbReference>
<dbReference type="MINT" id="P25340"/>
<dbReference type="STRING" id="4932.YGL012W"/>
<dbReference type="GlyGen" id="P25340">
    <property type="glycosylation" value="1 site"/>
</dbReference>
<dbReference type="iPTMnet" id="P25340"/>
<dbReference type="PaxDb" id="4932-YGL012W"/>
<dbReference type="PeptideAtlas" id="P25340"/>
<dbReference type="EnsemblFungi" id="YGL012W_mRNA">
    <property type="protein sequence ID" value="YGL012W"/>
    <property type="gene ID" value="YGL012W"/>
</dbReference>
<dbReference type="GeneID" id="852872"/>
<dbReference type="KEGG" id="sce:YGL012W"/>
<dbReference type="AGR" id="SGD:S000002980"/>
<dbReference type="SGD" id="S000002980">
    <property type="gene designation" value="ERG4"/>
</dbReference>
<dbReference type="VEuPathDB" id="FungiDB:YGL012W"/>
<dbReference type="eggNOG" id="KOG1435">
    <property type="taxonomic scope" value="Eukaryota"/>
</dbReference>
<dbReference type="GeneTree" id="ENSGT00390000000417"/>
<dbReference type="HOGENOM" id="CLU_015631_3_1_1"/>
<dbReference type="InParanoid" id="P25340"/>
<dbReference type="OMA" id="QLPYFCN"/>
<dbReference type="OrthoDB" id="5326588at2759"/>
<dbReference type="BioCyc" id="MetaCyc:YGL012W-MONOMER"/>
<dbReference type="BioCyc" id="YEAST:YGL012W-MONOMER"/>
<dbReference type="UniPathway" id="UPA00768">
    <property type="reaction ID" value="UER00764"/>
</dbReference>
<dbReference type="BioGRID-ORCS" id="852872">
    <property type="hits" value="2 hits in 10 CRISPR screens"/>
</dbReference>
<dbReference type="PRO" id="PR:P25340"/>
<dbReference type="Proteomes" id="UP000002311">
    <property type="component" value="Chromosome VII"/>
</dbReference>
<dbReference type="RNAct" id="P25340">
    <property type="molecule type" value="protein"/>
</dbReference>
<dbReference type="GO" id="GO:0005783">
    <property type="term" value="C:endoplasmic reticulum"/>
    <property type="evidence" value="ECO:0000314"/>
    <property type="project" value="SGD"/>
</dbReference>
<dbReference type="GO" id="GO:0005789">
    <property type="term" value="C:endoplasmic reticulum membrane"/>
    <property type="evidence" value="ECO:0000314"/>
    <property type="project" value="UniProt"/>
</dbReference>
<dbReference type="GO" id="GO:0000246">
    <property type="term" value="F:Delta24(24-1) sterol reductase activity"/>
    <property type="evidence" value="ECO:0000314"/>
    <property type="project" value="SGD"/>
</dbReference>
<dbReference type="GO" id="GO:0050614">
    <property type="term" value="F:Delta24-sterol reductase activity"/>
    <property type="evidence" value="ECO:0000314"/>
    <property type="project" value="UniProt"/>
</dbReference>
<dbReference type="GO" id="GO:0006696">
    <property type="term" value="P:ergosterol biosynthetic process"/>
    <property type="evidence" value="ECO:0000315"/>
    <property type="project" value="SGD"/>
</dbReference>
<dbReference type="FunFam" id="1.20.120.1630:FF:000003">
    <property type="entry name" value="C-24(28) sterol reductase"/>
    <property type="match status" value="1"/>
</dbReference>
<dbReference type="Gene3D" id="1.20.120.1630">
    <property type="match status" value="1"/>
</dbReference>
<dbReference type="InterPro" id="IPR001171">
    <property type="entry name" value="ERG24_DHCR-like"/>
</dbReference>
<dbReference type="InterPro" id="IPR018083">
    <property type="entry name" value="Sterol_reductase_CS"/>
</dbReference>
<dbReference type="PANTHER" id="PTHR21257">
    <property type="entry name" value="DELTA(14)-STEROL REDUCTASE"/>
    <property type="match status" value="1"/>
</dbReference>
<dbReference type="PANTHER" id="PTHR21257:SF31">
    <property type="entry name" value="DELTA(24(24(1)))-STEROL REDUCTASE ERG4"/>
    <property type="match status" value="1"/>
</dbReference>
<dbReference type="Pfam" id="PF01222">
    <property type="entry name" value="ERG4_ERG24"/>
    <property type="match status" value="1"/>
</dbReference>
<dbReference type="PROSITE" id="PS01017">
    <property type="entry name" value="STEROL_REDUCT_1"/>
    <property type="match status" value="1"/>
</dbReference>
<dbReference type="PROSITE" id="PS01018">
    <property type="entry name" value="STEROL_REDUCT_2"/>
    <property type="match status" value="1"/>
</dbReference>
<evidence type="ECO:0000250" key="1">
    <source>
        <dbReference type="UniProtKB" id="G4SW86"/>
    </source>
</evidence>
<evidence type="ECO:0000255" key="2"/>
<evidence type="ECO:0000256" key="3">
    <source>
        <dbReference type="SAM" id="MobiDB-lite"/>
    </source>
</evidence>
<evidence type="ECO:0000269" key="4">
    <source>
    </source>
</evidence>
<evidence type="ECO:0000269" key="5">
    <source>
    </source>
</evidence>
<evidence type="ECO:0000269" key="6">
    <source>
    </source>
</evidence>
<evidence type="ECO:0000269" key="7">
    <source>
    </source>
</evidence>
<evidence type="ECO:0000269" key="8">
    <source>
    </source>
</evidence>
<evidence type="ECO:0000303" key="9">
    <source>
    </source>
</evidence>
<evidence type="ECO:0000303" key="10">
    <source>
    </source>
</evidence>
<evidence type="ECO:0000305" key="11"/>
<evidence type="ECO:0000305" key="12">
    <source>
    </source>
</evidence>
<comment type="function">
    <text evidence="4 5 8 9">C-24(28) sterol reductase; part of the third module of ergosterol biosynthesis pathway that includes the late steps of the pathway (PubMed:10722850, PubMed:12882006, PubMed:8125337). ERG4 Catalyzes the last step of ergosterol biosynthesis by converting ergosta-5,7,22,24(28)-tetraen-3beta-ol into ergosterol (PubMed:10722850, PubMed:12882006). The third module or late pathway involves the ergosterol synthesis itself through consecutive reactions that mainly occur in the endoplasmic reticulum (ER) membrane. Firstly, the squalene synthase ERG9 catalyzes the condensation of 2 farnesyl pyrophosphate moieties to form squalene, which is the precursor of all steroids. Squalene synthase is crucial for balancing the incorporation of farnesyl diphosphate (FPP) into sterol and nonsterol isoprene synthesis. Secondly, the squalene epoxidase ERG1 catalyzes the stereospecific oxidation of squalene to (S)-2,3-epoxysqualene, which is considered to be a rate-limiting enzyme in steroid biosynthesis. Then, the lanosterol synthase ERG7 catalyzes the cyclization of (S)-2,3 oxidosqualene to lanosterol, a reaction that forms the sterol core. In the next steps, lanosterol is transformed to zymosterol through a complex process involving various demethylation, reduction and desaturation reactions. The lanosterol 14-alpha-demethylase ERG11 (also known as CYP51) catalyzes C14-demethylation of lanosterol to produce 4,4'-dimethyl cholesta-8,14,24-triene-3-beta-ol, which is critical for ergosterol biosynthesis. The C-14 reductase ERG24 reduces the C14=C15 double bond of 4,4-dimethyl-cholesta-8,14,24-trienol to produce 4,4-dimethyl-cholesta-8,24-dienol. 4,4-dimethyl-cholesta-8,24-dienol is substrate of the C-4 demethylation complex ERG25-ERG26-ERG27 in which ERG25 catalyzes the three-step monooxygenation required for the demethylation of 4,4-dimethyl and 4alpha-methylsterols, ERG26 catalyzes the oxidative decarboxylation that results in a reduction of the 3-beta-hydroxy group at the C-3 carbon to an oxo group, and ERG27 is responsible for the reduction of the keto group on the C-3. ERG28 has a role as a scaffold to help anchor ERG25, ERG26 and ERG27 to the endoplasmic reticulum and ERG29 regulates the activity of the iron-containing C4-methylsterol oxidase ERG25. Then, the sterol 24-C-methyltransferase ERG6 catalyzes the methyl transfer from S-adenosyl-methionine to the C-24 of zymosterol to form fecosterol. The C-8 sterol isomerase ERG2 catalyzes the reaction which results in unsaturation at C-7 in the B ring of sterols and thus converts fecosterol to episterol. The sterol-C5-desaturase ERG3 then catalyzes the introduction of a C-5 double bond in the B ring to produce 5-dehydroepisterol. The C-22 sterol desaturase ERG5 further converts 5-dehydroepisterol into ergosta-5,7,22,24(28)-tetraen-3beta-ol by forming the C-22(23) double bond in the sterol side chain. Finally, ergosta-5,7,22,24(28)-tetraen-3beta-ol is substrate of the C-24(28) sterol reductase ERG4 to produce ergosterol (PubMed:32679672).</text>
</comment>
<comment type="catalytic activity">
    <reaction evidence="4">
        <text>ergosterol + NADP(+) = ergosta-5,7,22,24(28)-tetraen-3beta-ol + NADPH + H(+)</text>
        <dbReference type="Rhea" id="RHEA:18501"/>
        <dbReference type="ChEBI" id="CHEBI:15378"/>
        <dbReference type="ChEBI" id="CHEBI:16933"/>
        <dbReference type="ChEBI" id="CHEBI:18249"/>
        <dbReference type="ChEBI" id="CHEBI:57783"/>
        <dbReference type="ChEBI" id="CHEBI:58349"/>
        <dbReference type="EC" id="1.3.1.71"/>
    </reaction>
    <physiologicalReaction direction="right-to-left" evidence="4">
        <dbReference type="Rhea" id="RHEA:18503"/>
    </physiologicalReaction>
</comment>
<comment type="pathway">
    <text evidence="4">Steroid metabolism; ergosterol biosynthesis; ergosterol from zymosterol: step 5/5.</text>
</comment>
<comment type="subcellular location">
    <subcellularLocation>
        <location evidence="4">Endoplasmic reticulum membrane</location>
        <topology evidence="2">Multi-pass membrane protein</topology>
    </subcellularLocation>
</comment>
<comment type="disruption phenotype">
    <text evidence="4 7">Abolishes the production of ergosterol (PubMed:37604855). Leads to pleiotropic defects such as hypersensitivity to divalent cations and a number of drugs such as cycloheximide, miconazole, 4-nitroquinoline, fluconazole, and sodium dodecyl sulfate (PubMed:10722850). Also leads to sensitivity to the Golgi-destabilizing drug brefeldin A (PubMed:10722850).</text>
</comment>
<comment type="miscellaneous">
    <text evidence="6">Present with 1640 molecules/cell in log phase SD medium.</text>
</comment>
<comment type="similarity">
    <text evidence="11">Belongs to the ERG4/ERG24 family.</text>
</comment>
<comment type="caution">
    <text evidence="12">Was originally thought to be a transport protein.</text>
</comment>
<protein>
    <recommendedName>
        <fullName evidence="10">Delta(24(24(1)))-sterol reductase ERG4</fullName>
        <ecNumber evidence="4">1.3.1.71</ecNumber>
    </recommendedName>
    <alternativeName>
        <fullName evidence="10">C-24(28) sterol reductase ERG4</fullName>
    </alternativeName>
    <alternativeName>
        <fullName evidence="10">Ergosterol biosynthetic protein 4</fullName>
    </alternativeName>
    <alternativeName>
        <fullName evidence="10">Sterol Delta(24(28))-reductase ERG4</fullName>
    </alternativeName>
</protein>
<proteinExistence type="evidence at protein level"/>
<accession>P25340</accession>
<accession>D6VUC5</accession>
<accession>E9P929</accession>
<reference key="1">
    <citation type="journal article" date="1991" name="Yeast">
        <title>The YGL022 gene encodes a putative transport protein.</title>
        <authorList>
            <person name="Chen W."/>
            <person name="Capieaux E."/>
            <person name="Balzi E."/>
            <person name="Goffeau A."/>
        </authorList>
    </citation>
    <scope>NUCLEOTIDE SEQUENCE [GENOMIC DNA]</scope>
    <source>
        <strain>ATCC 46191 / IL125-2B</strain>
    </source>
</reference>
<reference key="2">
    <citation type="journal article" date="1991" name="Yeast">
        <title>The DNA sequencing of the 17 kb HindIII fragment spanning the LEU1 and ATE1 loci on chromosome VII from Saccharomyces cerevisiae reveals the PDR6 gene, a new member of the genetic network controlling pleiotropic drug resistance.</title>
        <authorList>
            <person name="Chen W."/>
            <person name="Balzi E."/>
            <person name="Capieaux E."/>
            <person name="Choder M."/>
            <person name="Goffeau A."/>
        </authorList>
    </citation>
    <scope>NUCLEOTIDE SEQUENCE [GENOMIC DNA]</scope>
    <source>
        <strain>ATCC 46191 / IL125-2B</strain>
    </source>
</reference>
<reference key="3">
    <citation type="journal article" date="1997" name="Nature">
        <title>The nucleotide sequence of Saccharomyces cerevisiae chromosome VII.</title>
        <authorList>
            <person name="Tettelin H."/>
            <person name="Agostoni-Carbone M.L."/>
            <person name="Albermann K."/>
            <person name="Albers M."/>
            <person name="Arroyo J."/>
            <person name="Backes U."/>
            <person name="Barreiros T."/>
            <person name="Bertani I."/>
            <person name="Bjourson A.J."/>
            <person name="Brueckner M."/>
            <person name="Bruschi C.V."/>
            <person name="Carignani G."/>
            <person name="Castagnoli L."/>
            <person name="Cerdan E."/>
            <person name="Clemente M.L."/>
            <person name="Coblenz A."/>
            <person name="Coglievina M."/>
            <person name="Coissac E."/>
            <person name="Defoor E."/>
            <person name="Del Bino S."/>
            <person name="Delius H."/>
            <person name="Delneri D."/>
            <person name="de Wergifosse P."/>
            <person name="Dujon B."/>
            <person name="Durand P."/>
            <person name="Entian K.-D."/>
            <person name="Eraso P."/>
            <person name="Escribano V."/>
            <person name="Fabiani L."/>
            <person name="Fartmann B."/>
            <person name="Feroli F."/>
            <person name="Feuermann M."/>
            <person name="Frontali L."/>
            <person name="Garcia-Gonzalez M."/>
            <person name="Garcia-Saez M.I."/>
            <person name="Goffeau A."/>
            <person name="Guerreiro P."/>
            <person name="Hani J."/>
            <person name="Hansen M."/>
            <person name="Hebling U."/>
            <person name="Hernandez K."/>
            <person name="Heumann K."/>
            <person name="Hilger F."/>
            <person name="Hofmann B."/>
            <person name="Indge K.J."/>
            <person name="James C.M."/>
            <person name="Klima R."/>
            <person name="Koetter P."/>
            <person name="Kramer B."/>
            <person name="Kramer W."/>
            <person name="Lauquin G."/>
            <person name="Leuther H."/>
            <person name="Louis E.J."/>
            <person name="Maillier E."/>
            <person name="Marconi A."/>
            <person name="Martegani E."/>
            <person name="Mazon M.J."/>
            <person name="Mazzoni C."/>
            <person name="McReynolds A.D.K."/>
            <person name="Melchioretto P."/>
            <person name="Mewes H.-W."/>
            <person name="Minenkova O."/>
            <person name="Mueller-Auer S."/>
            <person name="Nawrocki A."/>
            <person name="Netter P."/>
            <person name="Neu R."/>
            <person name="Nombela C."/>
            <person name="Oliver S.G."/>
            <person name="Panzeri L."/>
            <person name="Paoluzi S."/>
            <person name="Plevani P."/>
            <person name="Portetelle D."/>
            <person name="Portillo F."/>
            <person name="Potier S."/>
            <person name="Purnelle B."/>
            <person name="Rieger M."/>
            <person name="Riles L."/>
            <person name="Rinaldi T."/>
            <person name="Robben J."/>
            <person name="Rodrigues-Pousada C."/>
            <person name="Rodriguez-Belmonte E."/>
            <person name="Rodriguez-Torres A.M."/>
            <person name="Rose M."/>
            <person name="Ruzzi M."/>
            <person name="Saliola M."/>
            <person name="Sanchez-Perez M."/>
            <person name="Schaefer B."/>
            <person name="Schaefer M."/>
            <person name="Scharfe M."/>
            <person name="Schmidheini T."/>
            <person name="Schreer A."/>
            <person name="Skala J."/>
            <person name="Souciet J.-L."/>
            <person name="Steensma H.Y."/>
            <person name="Talla E."/>
            <person name="Thierry A."/>
            <person name="Vandenbol M."/>
            <person name="van der Aart Q.J.M."/>
            <person name="Van Dyck L."/>
            <person name="Vanoni M."/>
            <person name="Verhasselt P."/>
            <person name="Voet M."/>
            <person name="Volckaert G."/>
            <person name="Wambutt R."/>
            <person name="Watson M.D."/>
            <person name="Weber N."/>
            <person name="Wedler E."/>
            <person name="Wedler H."/>
            <person name="Wipfli P."/>
            <person name="Wolf K."/>
            <person name="Wright L.F."/>
            <person name="Zaccaria P."/>
            <person name="Zimmermann M."/>
            <person name="Zollner A."/>
            <person name="Kleine K."/>
        </authorList>
    </citation>
    <scope>NUCLEOTIDE SEQUENCE [LARGE SCALE GENOMIC DNA]</scope>
    <source>
        <strain>ATCC 204508 / S288c</strain>
    </source>
</reference>
<reference key="4">
    <citation type="journal article" date="2014" name="G3 (Bethesda)">
        <title>The reference genome sequence of Saccharomyces cerevisiae: Then and now.</title>
        <authorList>
            <person name="Engel S.R."/>
            <person name="Dietrich F.S."/>
            <person name="Fisk D.G."/>
            <person name="Binkley G."/>
            <person name="Balakrishnan R."/>
            <person name="Costanzo M.C."/>
            <person name="Dwight S.S."/>
            <person name="Hitz B.C."/>
            <person name="Karra K."/>
            <person name="Nash R.S."/>
            <person name="Weng S."/>
            <person name="Wong E.D."/>
            <person name="Lloyd P."/>
            <person name="Skrzypek M.S."/>
            <person name="Miyasato S.R."/>
            <person name="Simison M."/>
            <person name="Cherry J.M."/>
        </authorList>
    </citation>
    <scope>GENOME REANNOTATION</scope>
    <source>
        <strain>ATCC 204508 / S288c</strain>
    </source>
</reference>
<reference key="5">
    <citation type="journal article" date="2007" name="Genome Res.">
        <title>Approaching a complete repository of sequence-verified protein-encoding clones for Saccharomyces cerevisiae.</title>
        <authorList>
            <person name="Hu Y."/>
            <person name="Rolfs A."/>
            <person name="Bhullar B."/>
            <person name="Murthy T.V.S."/>
            <person name="Zhu C."/>
            <person name="Berger M.F."/>
            <person name="Camargo A.A."/>
            <person name="Kelley F."/>
            <person name="McCarron S."/>
            <person name="Jepson D."/>
            <person name="Richardson A."/>
            <person name="Raphael J."/>
            <person name="Moreira D."/>
            <person name="Taycher E."/>
            <person name="Zuo D."/>
            <person name="Mohr S."/>
            <person name="Kane M.F."/>
            <person name="Williamson J."/>
            <person name="Simpson A.J.G."/>
            <person name="Bulyk M.L."/>
            <person name="Harlow E."/>
            <person name="Marsischky G."/>
            <person name="Kolodner R.D."/>
            <person name="LaBaer J."/>
        </authorList>
    </citation>
    <scope>NUCLEOTIDE SEQUENCE [GENOMIC DNA]</scope>
    <source>
        <strain>ATCC 204508 / S288c</strain>
    </source>
</reference>
<reference key="6">
    <citation type="journal article" date="1994" name="Gene">
        <title>The identification of a gene family in the Saccharomyces cerevisiae ergosterol biosynthesis pathway.</title>
        <authorList>
            <person name="Lai M.H."/>
            <person name="Bard M."/>
            <person name="Pierson C.A."/>
            <person name="Alexander J.F."/>
            <person name="Goebl M."/>
            <person name="Carter G.T."/>
            <person name="Kirsch D.R."/>
        </authorList>
    </citation>
    <scope>FUNCTION</scope>
</reference>
<reference key="7">
    <citation type="journal article" date="2000" name="FEBS Lett.">
        <title>Biochemical characterization and subcellular localization of the sterol C-24(28) reductase, erg4p, from the yeast saccharomyces cerevisiae.</title>
        <authorList>
            <person name="Zweytick D."/>
            <person name="Hrastnik C."/>
            <person name="Kohlwein S.D."/>
            <person name="Daum G."/>
        </authorList>
    </citation>
    <scope>FUNCTION</scope>
    <scope>DISRUPTION PHENOTYPE</scope>
    <scope>CATALYTIC ACTIVITY</scope>
    <scope>SUBCELLULAR LOCATION</scope>
    <scope>PATHWAY</scope>
</reference>
<reference key="8">
    <citation type="journal article" date="2003" name="Biotechnol. Lett.">
        <title>Overexpression of a sterol C-24(28) reductase increases ergosterol production in Saccharomyces cerevisiae.</title>
        <authorList>
            <person name="He X."/>
            <person name="Zhang B."/>
            <person name="Tan H."/>
        </authorList>
    </citation>
    <scope>FUNCTION</scope>
</reference>
<reference key="9">
    <citation type="journal article" date="2003" name="Nature">
        <title>Global analysis of protein expression in yeast.</title>
        <authorList>
            <person name="Ghaemmaghami S."/>
            <person name="Huh W.-K."/>
            <person name="Bower K."/>
            <person name="Howson R.W."/>
            <person name="Belle A."/>
            <person name="Dephoure N."/>
            <person name="O'Shea E.K."/>
            <person name="Weissman J.S."/>
        </authorList>
    </citation>
    <scope>LEVEL OF PROTEIN EXPRESSION [LARGE SCALE ANALYSIS]</scope>
</reference>
<reference key="10">
    <citation type="journal article" date="2006" name="Proc. Natl. Acad. Sci. U.S.A.">
        <title>A global topology map of the Saccharomyces cerevisiae membrane proteome.</title>
        <authorList>
            <person name="Kim H."/>
            <person name="Melen K."/>
            <person name="Oesterberg M."/>
            <person name="von Heijne G."/>
        </authorList>
    </citation>
    <scope>TOPOLOGY [LARGE SCALE ANALYSIS]</scope>
    <source>
        <strain>ATCC 208353 / W303-1A</strain>
    </source>
</reference>
<reference key="11">
    <citation type="journal article" date="2020" name="Genes (Basel)">
        <title>Regulation of ergosterol biosynthesis in Saccharomyces cerevisiae.</title>
        <authorList>
            <person name="Jorda T."/>
            <person name="Puig S."/>
        </authorList>
    </citation>
    <scope>REVIEW ON ERGOSTEROL BIOSYNTHESIS</scope>
</reference>
<reference key="12">
    <citation type="journal article" date="2023" name="Sci. Rep.">
        <title>Yeast lacking the sterol C-5 desaturase Erg3 are tolerant to the anti-inflammatory triterpenoid saponin escin.</title>
        <authorList>
            <person name="Johnston E.J."/>
            <person name="Tallis J."/>
            <person name="Cunningham-Oakes E."/>
            <person name="Moses T."/>
            <person name="Moore S.J."/>
            <person name="Hosking S."/>
            <person name="Rosser S.J."/>
        </authorList>
    </citation>
    <scope>DISRUPTION PHENOTYPE</scope>
</reference>
<keyword id="KW-0256">Endoplasmic reticulum</keyword>
<keyword id="KW-0444">Lipid biosynthesis</keyword>
<keyword id="KW-0443">Lipid metabolism</keyword>
<keyword id="KW-0472">Membrane</keyword>
<keyword id="KW-0521">NADP</keyword>
<keyword id="KW-0560">Oxidoreductase</keyword>
<keyword id="KW-1185">Reference proteome</keyword>
<keyword id="KW-0752">Steroid biosynthesis</keyword>
<keyword id="KW-0753">Steroid metabolism</keyword>
<keyword id="KW-0756">Sterol biosynthesis</keyword>
<keyword id="KW-1207">Sterol metabolism</keyword>
<keyword id="KW-0812">Transmembrane</keyword>
<keyword id="KW-1133">Transmembrane helix</keyword>
<name>ERG4_YEAST</name>
<feature type="chain" id="PRO_0000207491" description="Delta(24(24(1)))-sterol reductase ERG4">
    <location>
        <begin position="1"/>
        <end position="473"/>
    </location>
</feature>
<feature type="topological domain" description="Lumenal" evidence="2">
    <location>
        <begin position="1"/>
        <end position="39"/>
    </location>
</feature>
<feature type="transmembrane region" description="Helical" evidence="2">
    <location>
        <begin position="40"/>
        <end position="64"/>
    </location>
</feature>
<feature type="topological domain" description="Cytoplasmic" evidence="2">
    <location>
        <begin position="65"/>
        <end position="101"/>
    </location>
</feature>
<feature type="transmembrane region" description="Helical" evidence="2">
    <location>
        <begin position="102"/>
        <end position="123"/>
    </location>
</feature>
<feature type="topological domain" description="Lumenal" evidence="2">
    <location>
        <begin position="124"/>
        <end position="138"/>
    </location>
</feature>
<feature type="transmembrane region" description="Helical" evidence="2">
    <location>
        <begin position="139"/>
        <end position="157"/>
    </location>
</feature>
<feature type="topological domain" description="Cytoplasmic" evidence="2">
    <location>
        <begin position="158"/>
        <end position="174"/>
    </location>
</feature>
<feature type="transmembrane region" description="Helical" evidence="2">
    <location>
        <begin position="175"/>
        <end position="197"/>
    </location>
</feature>
<feature type="topological domain" description="Lumenal" evidence="2">
    <location>
        <begin position="198"/>
        <end position="232"/>
    </location>
</feature>
<feature type="transmembrane region" description="Helical" evidence="2">
    <location>
        <begin position="233"/>
        <end position="249"/>
    </location>
</feature>
<feature type="topological domain" description="Cytoplasmic" evidence="2">
    <location>
        <begin position="250"/>
        <end position="326"/>
    </location>
</feature>
<feature type="transmembrane region" description="Helical" evidence="2">
    <location>
        <begin position="327"/>
        <end position="346"/>
    </location>
</feature>
<feature type="topological domain" description="Lumenal" evidence="2">
    <location>
        <begin position="347"/>
        <end position="414"/>
    </location>
</feature>
<feature type="transmembrane region" description="Helical" evidence="2">
    <location>
        <begin position="415"/>
        <end position="439"/>
    </location>
</feature>
<feature type="topological domain" description="Cytoplasmic" evidence="2">
    <location>
        <begin position="440"/>
        <end position="473"/>
    </location>
</feature>
<feature type="region of interest" description="Disordered" evidence="3">
    <location>
        <begin position="1"/>
        <end position="20"/>
    </location>
</feature>
<feature type="compositionally biased region" description="Basic and acidic residues" evidence="3">
    <location>
        <begin position="1"/>
        <end position="18"/>
    </location>
</feature>
<feature type="binding site" evidence="1">
    <location>
        <position position="353"/>
    </location>
    <ligand>
        <name>NADP(+)</name>
        <dbReference type="ChEBI" id="CHEBI:58349"/>
    </ligand>
</feature>
<feature type="binding site" evidence="1">
    <location>
        <position position="357"/>
    </location>
    <ligand>
        <name>NADP(+)</name>
        <dbReference type="ChEBI" id="CHEBI:58349"/>
    </ligand>
</feature>
<feature type="binding site" evidence="1">
    <location>
        <position position="393"/>
    </location>
    <ligand>
        <name>NADP(+)</name>
        <dbReference type="ChEBI" id="CHEBI:58349"/>
    </ligand>
</feature>
<feature type="binding site" evidence="1">
    <location>
        <begin position="405"/>
        <end position="406"/>
    </location>
    <ligand>
        <name>NADP(+)</name>
        <dbReference type="ChEBI" id="CHEBI:58349"/>
    </ligand>
</feature>
<feature type="binding site" evidence="1">
    <location>
        <position position="445"/>
    </location>
    <ligand>
        <name>NADP(+)</name>
        <dbReference type="ChEBI" id="CHEBI:58349"/>
    </ligand>
</feature>
<feature type="binding site" evidence="1">
    <location>
        <begin position="449"/>
        <end position="453"/>
    </location>
    <ligand>
        <name>NADP(+)</name>
        <dbReference type="ChEBI" id="CHEBI:58349"/>
    </ligand>
</feature>
<feature type="binding site" evidence="1">
    <location>
        <position position="460"/>
    </location>
    <ligand>
        <name>NADP(+)</name>
        <dbReference type="ChEBI" id="CHEBI:58349"/>
    </ligand>
</feature>
<feature type="sequence conflict" description="In Ref. 5; AAT93224." evidence="11" ref="5">
    <original>P</original>
    <variation>L</variation>
    <location>
        <position position="33"/>
    </location>
</feature>
<feature type="sequence conflict" description="In Ref. 1 and 2." evidence="11" ref="1 2">
    <original>G</original>
    <variation>V</variation>
    <location>
        <position position="366"/>
    </location>
</feature>
<gene>
    <name evidence="10" type="primary">ERG4</name>
    <name type="ordered locus">YGL012W</name>
    <name type="ORF">YGL022</name>
</gene>
<sequence>MAKDNSEKLQVQGEEKKSKQPVNFLPQGKWLKPNEIEYEFGGTTGVIGMLIGFPLLMYYMWICAEFYHGKVALPKAGESWMHFIKHLYQLVLENGIPEKYDWTIFLTFWVFQIIFYYTLPGIWTKGQPLSHLKGKQLPYFCNAMWTLYVTTTLVLVLHFTNLFRLYVIIDRFGRIMTCAIISGFAFSIILYLWTLFISHDYHRMTGNHLYDFFMGAPLNPRWGILDLKMFFEVRLPWFTLYFITLGACLKQWETYGYVTPQLGVVMLAHWLYANACAKGEELIVPTWDMAYEKFGFMLIFWNIAGVPYTYCHCTLYLYYHDPSEYHWSTLYNVSLYVVLLCAYYFFDTANAQKNAFRKQMSGDKTGRKTFPFLPYQILKNPKYMVTSNGSYLLIDGWYTLARKIHYTADWTQSLVWALSCGFNSVFPWFFPVFFLVVLIHRAFRDQAKCKRKYGKDWDEYCKHCPYVFIPYVF</sequence>